<feature type="chain" id="PRO_0000178692" description="Probable chromosome-partitioning protein ParB">
    <location>
        <begin position="1"/>
        <end position="324"/>
    </location>
</feature>
<feature type="region of interest" description="Disordered" evidence="2">
    <location>
        <begin position="240"/>
        <end position="266"/>
    </location>
</feature>
<feature type="compositionally biased region" description="Low complexity" evidence="2">
    <location>
        <begin position="242"/>
        <end position="252"/>
    </location>
</feature>
<accession>O83295</accession>
<name>PARB_TREPA</name>
<dbReference type="EMBL" id="AE000520">
    <property type="protein sequence ID" value="AAC65259.1"/>
    <property type="molecule type" value="Genomic_DNA"/>
</dbReference>
<dbReference type="PIR" id="A71346">
    <property type="entry name" value="A71346"/>
</dbReference>
<dbReference type="RefSeq" id="WP_010881720.1">
    <property type="nucleotide sequence ID" value="NC_021490.2"/>
</dbReference>
<dbReference type="SMR" id="O83295"/>
<dbReference type="IntAct" id="O83295">
    <property type="interactions" value="10"/>
</dbReference>
<dbReference type="STRING" id="243276.TP_0271"/>
<dbReference type="EnsemblBacteria" id="AAC65259">
    <property type="protein sequence ID" value="AAC65259"/>
    <property type="gene ID" value="TP_0271"/>
</dbReference>
<dbReference type="KEGG" id="tpa:TP_0271"/>
<dbReference type="KEGG" id="tpw:TPANIC_0271"/>
<dbReference type="eggNOG" id="COG1475">
    <property type="taxonomic scope" value="Bacteria"/>
</dbReference>
<dbReference type="HOGENOM" id="CLU_023853_0_0_12"/>
<dbReference type="OrthoDB" id="9802051at2"/>
<dbReference type="Proteomes" id="UP000000811">
    <property type="component" value="Chromosome"/>
</dbReference>
<dbReference type="GO" id="GO:0005694">
    <property type="term" value="C:chromosome"/>
    <property type="evidence" value="ECO:0007669"/>
    <property type="project" value="TreeGrafter"/>
</dbReference>
<dbReference type="GO" id="GO:0003677">
    <property type="term" value="F:DNA binding"/>
    <property type="evidence" value="ECO:0007669"/>
    <property type="project" value="UniProtKB-KW"/>
</dbReference>
<dbReference type="GO" id="GO:0007059">
    <property type="term" value="P:chromosome segregation"/>
    <property type="evidence" value="ECO:0007669"/>
    <property type="project" value="UniProtKB-KW"/>
</dbReference>
<dbReference type="GO" id="GO:0045881">
    <property type="term" value="P:positive regulation of sporulation resulting in formation of a cellular spore"/>
    <property type="evidence" value="ECO:0007669"/>
    <property type="project" value="TreeGrafter"/>
</dbReference>
<dbReference type="CDD" id="cd16393">
    <property type="entry name" value="SPO0J_N"/>
    <property type="match status" value="1"/>
</dbReference>
<dbReference type="FunFam" id="1.10.10.2830:FF:000001">
    <property type="entry name" value="Chromosome partitioning protein ParB"/>
    <property type="match status" value="1"/>
</dbReference>
<dbReference type="FunFam" id="3.90.1530.30:FF:000001">
    <property type="entry name" value="Chromosome partitioning protein ParB"/>
    <property type="match status" value="1"/>
</dbReference>
<dbReference type="Gene3D" id="1.10.10.2830">
    <property type="match status" value="1"/>
</dbReference>
<dbReference type="Gene3D" id="3.90.1530.30">
    <property type="match status" value="1"/>
</dbReference>
<dbReference type="InterPro" id="IPR050336">
    <property type="entry name" value="Chromosome_partition/occlusion"/>
</dbReference>
<dbReference type="InterPro" id="IPR041468">
    <property type="entry name" value="HTH_ParB/Spo0J"/>
</dbReference>
<dbReference type="InterPro" id="IPR004437">
    <property type="entry name" value="ParB/RepB/Spo0J"/>
</dbReference>
<dbReference type="InterPro" id="IPR003115">
    <property type="entry name" value="ParB/Sulfiredoxin_dom"/>
</dbReference>
<dbReference type="InterPro" id="IPR036086">
    <property type="entry name" value="ParB/Sulfiredoxin_sf"/>
</dbReference>
<dbReference type="InterPro" id="IPR057240">
    <property type="entry name" value="ParB_dimer_C"/>
</dbReference>
<dbReference type="NCBIfam" id="TIGR00180">
    <property type="entry name" value="parB_part"/>
    <property type="match status" value="1"/>
</dbReference>
<dbReference type="PANTHER" id="PTHR33375">
    <property type="entry name" value="CHROMOSOME-PARTITIONING PROTEIN PARB-RELATED"/>
    <property type="match status" value="1"/>
</dbReference>
<dbReference type="PANTHER" id="PTHR33375:SF1">
    <property type="entry name" value="CHROMOSOME-PARTITIONING PROTEIN PARB-RELATED"/>
    <property type="match status" value="1"/>
</dbReference>
<dbReference type="Pfam" id="PF17762">
    <property type="entry name" value="HTH_ParB"/>
    <property type="match status" value="1"/>
</dbReference>
<dbReference type="Pfam" id="PF23552">
    <property type="entry name" value="ParB_dimer"/>
    <property type="match status" value="1"/>
</dbReference>
<dbReference type="Pfam" id="PF02195">
    <property type="entry name" value="ParBc"/>
    <property type="match status" value="1"/>
</dbReference>
<dbReference type="SMART" id="SM00470">
    <property type="entry name" value="ParB"/>
    <property type="match status" value="1"/>
</dbReference>
<dbReference type="SUPFAM" id="SSF109709">
    <property type="entry name" value="KorB DNA-binding domain-like"/>
    <property type="match status" value="1"/>
</dbReference>
<dbReference type="SUPFAM" id="SSF110849">
    <property type="entry name" value="ParB/Sulfiredoxin"/>
    <property type="match status" value="1"/>
</dbReference>
<evidence type="ECO:0000250" key="1"/>
<evidence type="ECO:0000256" key="2">
    <source>
        <dbReference type="SAM" id="MobiDB-lite"/>
    </source>
</evidence>
<evidence type="ECO:0000305" key="3"/>
<sequence length="324" mass="35430">MGKDKLGKGIDALLQESSDRYDVRDSGGVQTVHYLDPTLLQANPHQARRTFAQESLEELAASIREHGVIQPVLAEKNQDGSWVIIAGERRTRAAILAGLNRIPVIVRTCDHEKKLAIALIENVQRENLNPLEEARAYQHIMDLGNLSHEELAQRVGKNRSTITNALRLLKLPPEVQQSLSSRTLSAGHARALLSLTDMQLCVSVAQYVVTHALSVRAAEECVACLNRGGSLHDYAGARAHTAASSPSPGGSATDITRLPPSSPSTDAQLDARIRNADIADIEQQLLEQLGTKVRISGNLQRGRIEITYFSQAELERLYGLLKAH</sequence>
<protein>
    <recommendedName>
        <fullName>Probable chromosome-partitioning protein ParB</fullName>
    </recommendedName>
</protein>
<organism>
    <name type="scientific">Treponema pallidum (strain Nichols)</name>
    <dbReference type="NCBI Taxonomy" id="243276"/>
    <lineage>
        <taxon>Bacteria</taxon>
        <taxon>Pseudomonadati</taxon>
        <taxon>Spirochaetota</taxon>
        <taxon>Spirochaetia</taxon>
        <taxon>Spirochaetales</taxon>
        <taxon>Treponemataceae</taxon>
        <taxon>Treponema</taxon>
    </lineage>
</organism>
<keyword id="KW-0159">Chromosome partition</keyword>
<keyword id="KW-0238">DNA-binding</keyword>
<keyword id="KW-1185">Reference proteome</keyword>
<gene>
    <name type="primary">parB</name>
    <name type="ordered locus">TP_0271</name>
</gene>
<proteinExistence type="inferred from homology"/>
<comment type="function">
    <text evidence="1">Involved in chromosome partition. Localize to both poles of the predivisional cell following completion of DNA replication. Binds to the DNA origin of replication (By similarity).</text>
</comment>
<comment type="similarity">
    <text evidence="3">Belongs to the ParB family.</text>
</comment>
<reference key="1">
    <citation type="journal article" date="1998" name="Science">
        <title>Complete genome sequence of Treponema pallidum, the syphilis spirochete.</title>
        <authorList>
            <person name="Fraser C.M."/>
            <person name="Norris S.J."/>
            <person name="Weinstock G.M."/>
            <person name="White O."/>
            <person name="Sutton G.G."/>
            <person name="Dodson R.J."/>
            <person name="Gwinn M.L."/>
            <person name="Hickey E.K."/>
            <person name="Clayton R.A."/>
            <person name="Ketchum K.A."/>
            <person name="Sodergren E."/>
            <person name="Hardham J.M."/>
            <person name="McLeod M.P."/>
            <person name="Salzberg S.L."/>
            <person name="Peterson J.D."/>
            <person name="Khalak H.G."/>
            <person name="Richardson D.L."/>
            <person name="Howell J.K."/>
            <person name="Chidambaram M."/>
            <person name="Utterback T.R."/>
            <person name="McDonald L.A."/>
            <person name="Artiach P."/>
            <person name="Bowman C."/>
            <person name="Cotton M.D."/>
            <person name="Fujii C."/>
            <person name="Garland S.A."/>
            <person name="Hatch B."/>
            <person name="Horst K."/>
            <person name="Roberts K.M."/>
            <person name="Sandusky M."/>
            <person name="Weidman J.F."/>
            <person name="Smith H.O."/>
            <person name="Venter J.C."/>
        </authorList>
    </citation>
    <scope>NUCLEOTIDE SEQUENCE [LARGE SCALE GENOMIC DNA]</scope>
    <source>
        <strain>Nichols</strain>
    </source>
</reference>